<keyword id="KW-0004">4Fe-4S</keyword>
<keyword id="KW-0963">Cytoplasm</keyword>
<keyword id="KW-0408">Iron</keyword>
<keyword id="KW-0411">Iron-sulfur</keyword>
<keyword id="KW-0479">Metal-binding</keyword>
<keyword id="KW-0560">Oxidoreductase</keyword>
<keyword id="KW-1185">Reference proteome</keyword>
<name>HCP_GEOSL</name>
<comment type="function">
    <text evidence="1">Catalyzes the reduction of hydroxylamine to form NH(3) and H(2)O.</text>
</comment>
<comment type="catalytic activity">
    <reaction evidence="1">
        <text>A + NH4(+) + H2O = hydroxylamine + AH2 + H(+)</text>
        <dbReference type="Rhea" id="RHEA:22052"/>
        <dbReference type="ChEBI" id="CHEBI:13193"/>
        <dbReference type="ChEBI" id="CHEBI:15377"/>
        <dbReference type="ChEBI" id="CHEBI:15378"/>
        <dbReference type="ChEBI" id="CHEBI:15429"/>
        <dbReference type="ChEBI" id="CHEBI:17499"/>
        <dbReference type="ChEBI" id="CHEBI:28938"/>
        <dbReference type="EC" id="1.7.99.1"/>
    </reaction>
</comment>
<comment type="cofactor">
    <cofactor evidence="1">
        <name>[4Fe-4S] cluster</name>
        <dbReference type="ChEBI" id="CHEBI:49883"/>
    </cofactor>
    <text evidence="1">Binds 1 [4Fe-4S] cluster.</text>
</comment>
<comment type="cofactor">
    <cofactor evidence="1">
        <name>hybrid [4Fe-2O-2S] cluster</name>
        <dbReference type="ChEBI" id="CHEBI:60519"/>
    </cofactor>
    <text evidence="1">Binds 1 hybrid [4Fe-2O-2S] cluster.</text>
</comment>
<comment type="subcellular location">
    <subcellularLocation>
        <location evidence="1">Cytoplasm</location>
    </subcellularLocation>
</comment>
<comment type="similarity">
    <text evidence="1">Belongs to the HCP family.</text>
</comment>
<evidence type="ECO:0000255" key="1">
    <source>
        <dbReference type="HAMAP-Rule" id="MF_00069"/>
    </source>
</evidence>
<accession>Q74FD5</accession>
<organism>
    <name type="scientific">Geobacter sulfurreducens (strain ATCC 51573 / DSM 12127 / PCA)</name>
    <dbReference type="NCBI Taxonomy" id="243231"/>
    <lineage>
        <taxon>Bacteria</taxon>
        <taxon>Pseudomonadati</taxon>
        <taxon>Thermodesulfobacteriota</taxon>
        <taxon>Desulfuromonadia</taxon>
        <taxon>Geobacterales</taxon>
        <taxon>Geobacteraceae</taxon>
        <taxon>Geobacter</taxon>
    </lineage>
</organism>
<protein>
    <recommendedName>
        <fullName evidence="1">Hydroxylamine reductase</fullName>
        <ecNumber evidence="1">1.7.99.1</ecNumber>
    </recommendedName>
    <alternativeName>
        <fullName evidence="1">Hybrid-cluster protein</fullName>
        <shortName evidence="1">HCP</shortName>
    </alternativeName>
    <alternativeName>
        <fullName evidence="1">Prismane protein</fullName>
    </alternativeName>
</protein>
<dbReference type="EC" id="1.7.99.1" evidence="1"/>
<dbReference type="EMBL" id="AE017180">
    <property type="protein sequence ID" value="AAR34004.1"/>
    <property type="molecule type" value="Genomic_DNA"/>
</dbReference>
<dbReference type="RefSeq" id="NP_951731.3">
    <property type="nucleotide sequence ID" value="NC_002939.5"/>
</dbReference>
<dbReference type="RefSeq" id="WP_010941334.1">
    <property type="nucleotide sequence ID" value="NC_002939.5"/>
</dbReference>
<dbReference type="SMR" id="Q74FD5"/>
<dbReference type="FunCoup" id="Q74FD5">
    <property type="interactions" value="72"/>
</dbReference>
<dbReference type="STRING" id="243231.GSU0674"/>
<dbReference type="EnsemblBacteria" id="AAR34004">
    <property type="protein sequence ID" value="AAR34004"/>
    <property type="gene ID" value="GSU0674"/>
</dbReference>
<dbReference type="KEGG" id="gsu:GSU0674"/>
<dbReference type="PATRIC" id="fig|243231.5.peg.669"/>
<dbReference type="eggNOG" id="COG1151">
    <property type="taxonomic scope" value="Bacteria"/>
</dbReference>
<dbReference type="HOGENOM" id="CLU_038344_2_0_7"/>
<dbReference type="InParanoid" id="Q74FD5"/>
<dbReference type="OrthoDB" id="9761526at2"/>
<dbReference type="Proteomes" id="UP000000577">
    <property type="component" value="Chromosome"/>
</dbReference>
<dbReference type="GO" id="GO:0005737">
    <property type="term" value="C:cytoplasm"/>
    <property type="evidence" value="ECO:0007669"/>
    <property type="project" value="UniProtKB-SubCell"/>
</dbReference>
<dbReference type="GO" id="GO:0051539">
    <property type="term" value="F:4 iron, 4 sulfur cluster binding"/>
    <property type="evidence" value="ECO:0007669"/>
    <property type="project" value="UniProtKB-KW"/>
</dbReference>
<dbReference type="GO" id="GO:0050418">
    <property type="term" value="F:hydroxylamine reductase activity"/>
    <property type="evidence" value="ECO:0000318"/>
    <property type="project" value="GO_Central"/>
</dbReference>
<dbReference type="GO" id="GO:0046872">
    <property type="term" value="F:metal ion binding"/>
    <property type="evidence" value="ECO:0007669"/>
    <property type="project" value="UniProtKB-KW"/>
</dbReference>
<dbReference type="GO" id="GO:0004601">
    <property type="term" value="F:peroxidase activity"/>
    <property type="evidence" value="ECO:0000318"/>
    <property type="project" value="GO_Central"/>
</dbReference>
<dbReference type="GO" id="GO:0046210">
    <property type="term" value="P:nitric oxide catabolic process"/>
    <property type="evidence" value="ECO:0000318"/>
    <property type="project" value="GO_Central"/>
</dbReference>
<dbReference type="GO" id="GO:0042542">
    <property type="term" value="P:response to hydrogen peroxide"/>
    <property type="evidence" value="ECO:0000318"/>
    <property type="project" value="GO_Central"/>
</dbReference>
<dbReference type="CDD" id="cd01914">
    <property type="entry name" value="HCP"/>
    <property type="match status" value="1"/>
</dbReference>
<dbReference type="FunFam" id="1.20.1270.20:FF:000001">
    <property type="entry name" value="Hydroxylamine reductase"/>
    <property type="match status" value="1"/>
</dbReference>
<dbReference type="FunFam" id="1.20.1270.20:FF:000002">
    <property type="entry name" value="Hydroxylamine reductase"/>
    <property type="match status" value="1"/>
</dbReference>
<dbReference type="FunFam" id="3.40.50.2030:FF:000001">
    <property type="entry name" value="Hydroxylamine reductase"/>
    <property type="match status" value="1"/>
</dbReference>
<dbReference type="FunFam" id="3.40.50.2030:FF:000002">
    <property type="entry name" value="Hydroxylamine reductase"/>
    <property type="match status" value="1"/>
</dbReference>
<dbReference type="Gene3D" id="1.20.1270.20">
    <property type="match status" value="2"/>
</dbReference>
<dbReference type="Gene3D" id="3.40.50.2030">
    <property type="match status" value="2"/>
</dbReference>
<dbReference type="HAMAP" id="MF_00069">
    <property type="entry name" value="Hydroxylam_reduct"/>
    <property type="match status" value="1"/>
</dbReference>
<dbReference type="InterPro" id="IPR004137">
    <property type="entry name" value="HCP/CODH"/>
</dbReference>
<dbReference type="InterPro" id="IPR010048">
    <property type="entry name" value="Hydroxylam_reduct"/>
</dbReference>
<dbReference type="InterPro" id="IPR016099">
    <property type="entry name" value="Prismane-like_a/b-sand"/>
</dbReference>
<dbReference type="InterPro" id="IPR011254">
    <property type="entry name" value="Prismane-like_sf"/>
</dbReference>
<dbReference type="InterPro" id="IPR016100">
    <property type="entry name" value="Prismane_a-bundle"/>
</dbReference>
<dbReference type="NCBIfam" id="TIGR01703">
    <property type="entry name" value="hybrid_clust"/>
    <property type="match status" value="1"/>
</dbReference>
<dbReference type="NCBIfam" id="NF003658">
    <property type="entry name" value="PRK05290.1"/>
    <property type="match status" value="1"/>
</dbReference>
<dbReference type="PANTHER" id="PTHR30109">
    <property type="entry name" value="HYDROXYLAMINE REDUCTASE"/>
    <property type="match status" value="1"/>
</dbReference>
<dbReference type="PANTHER" id="PTHR30109:SF0">
    <property type="entry name" value="HYDROXYLAMINE REDUCTASE"/>
    <property type="match status" value="1"/>
</dbReference>
<dbReference type="Pfam" id="PF03063">
    <property type="entry name" value="Prismane"/>
    <property type="match status" value="1"/>
</dbReference>
<dbReference type="PIRSF" id="PIRSF000076">
    <property type="entry name" value="HCP"/>
    <property type="match status" value="1"/>
</dbReference>
<dbReference type="SUPFAM" id="SSF56821">
    <property type="entry name" value="Prismane protein-like"/>
    <property type="match status" value="1"/>
</dbReference>
<reference key="1">
    <citation type="journal article" date="2003" name="Science">
        <title>Genome of Geobacter sulfurreducens: metal reduction in subsurface environments.</title>
        <authorList>
            <person name="Methe B.A."/>
            <person name="Nelson K.E."/>
            <person name="Eisen J.A."/>
            <person name="Paulsen I.T."/>
            <person name="Nelson W.C."/>
            <person name="Heidelberg J.F."/>
            <person name="Wu D."/>
            <person name="Wu M."/>
            <person name="Ward N.L."/>
            <person name="Beanan M.J."/>
            <person name="Dodson R.J."/>
            <person name="Madupu R."/>
            <person name="Brinkac L.M."/>
            <person name="Daugherty S.C."/>
            <person name="DeBoy R.T."/>
            <person name="Durkin A.S."/>
            <person name="Gwinn M.L."/>
            <person name="Kolonay J.F."/>
            <person name="Sullivan S.A."/>
            <person name="Haft D.H."/>
            <person name="Selengut J."/>
            <person name="Davidsen T.M."/>
            <person name="Zafar N."/>
            <person name="White O."/>
            <person name="Tran B."/>
            <person name="Romero C."/>
            <person name="Forberger H.A."/>
            <person name="Weidman J.F."/>
            <person name="Khouri H.M."/>
            <person name="Feldblyum T.V."/>
            <person name="Utterback T.R."/>
            <person name="Van Aken S.E."/>
            <person name="Lovley D.R."/>
            <person name="Fraser C.M."/>
        </authorList>
    </citation>
    <scope>NUCLEOTIDE SEQUENCE [LARGE SCALE GENOMIC DNA]</scope>
    <source>
        <strain>ATCC 51573 / DSM 12127 / PCA</strain>
    </source>
</reference>
<sequence length="550" mass="59674">MGMFCNQCEQAAKGVGCEIMGVCGKNPEVAALQDLMLYGLKGLAIYADKARELGARDEAIDLFMIEGLFTTVTNVDFDPVSLAGKLRTCYDMKEKAKSLYETAYREKNGGHAPAIAAGPAAWVIASDLEGLVKQGLEHGINTHHTDADVRSAIEILIYGLKGMAAYADHAYILGKKDEEVFAFFHKAMAATADPAKGLMDFVGLSMECGKLNIKVMGMLNEGHVDHYGHPVPTKVPTGTRRNKGILVSGHDLRMLEELLKQTAGKGIDIYTHGEMLPAHGYPGLKQKYPHLYGNFGGAWQDQAKEFPLFPGAIIFNTNCIQRPADSYKDRLFSWGQVGWPGVKHISGWDFSEVINKALECPELADAPEKEILTGFGHNAVLGVADKVIEGVKAGAIKHFFLIGGCDGAKPGRNYYTELAEKVPQDCVILTLACGKYRFNKLEFGDIGGIPRLLDIGQCNDAYSALQIALALANAFNCGVNDLPLSMILSWYEQKAVVILLSLLHLGIRNIKIGPSLPAFVTPNVLNFLVENFNLGPITTVEADLKAALGQ</sequence>
<feature type="chain" id="PRO_1000092339" description="Hydroxylamine reductase">
    <location>
        <begin position="1"/>
        <end position="550"/>
    </location>
</feature>
<feature type="binding site" evidence="1">
    <location>
        <position position="5"/>
    </location>
    <ligand>
        <name>[4Fe-4S] cluster</name>
        <dbReference type="ChEBI" id="CHEBI:49883"/>
    </ligand>
</feature>
<feature type="binding site" evidence="1">
    <location>
        <position position="8"/>
    </location>
    <ligand>
        <name>[4Fe-4S] cluster</name>
        <dbReference type="ChEBI" id="CHEBI:49883"/>
    </ligand>
</feature>
<feature type="binding site" evidence="1">
    <location>
        <position position="17"/>
    </location>
    <ligand>
        <name>[4Fe-4S] cluster</name>
        <dbReference type="ChEBI" id="CHEBI:49883"/>
    </ligand>
</feature>
<feature type="binding site" evidence="1">
    <location>
        <position position="23"/>
    </location>
    <ligand>
        <name>[4Fe-4S] cluster</name>
        <dbReference type="ChEBI" id="CHEBI:49883"/>
    </ligand>
</feature>
<feature type="binding site" evidence="1">
    <location>
        <position position="250"/>
    </location>
    <ligand>
        <name>hybrid [4Fe-2O-2S] cluster</name>
        <dbReference type="ChEBI" id="CHEBI:60519"/>
    </ligand>
</feature>
<feature type="binding site" evidence="1">
    <location>
        <position position="274"/>
    </location>
    <ligand>
        <name>hybrid [4Fe-2O-2S] cluster</name>
        <dbReference type="ChEBI" id="CHEBI:60519"/>
    </ligand>
</feature>
<feature type="binding site" evidence="1">
    <location>
        <position position="319"/>
    </location>
    <ligand>
        <name>hybrid [4Fe-2O-2S] cluster</name>
        <dbReference type="ChEBI" id="CHEBI:60519"/>
    </ligand>
</feature>
<feature type="binding site" description="via persulfide group" evidence="1">
    <location>
        <position position="405"/>
    </location>
    <ligand>
        <name>hybrid [4Fe-2O-2S] cluster</name>
        <dbReference type="ChEBI" id="CHEBI:60519"/>
    </ligand>
</feature>
<feature type="binding site" evidence="1">
    <location>
        <position position="433"/>
    </location>
    <ligand>
        <name>hybrid [4Fe-2O-2S] cluster</name>
        <dbReference type="ChEBI" id="CHEBI:60519"/>
    </ligand>
</feature>
<feature type="binding site" evidence="1">
    <location>
        <position position="458"/>
    </location>
    <ligand>
        <name>hybrid [4Fe-2O-2S] cluster</name>
        <dbReference type="ChEBI" id="CHEBI:60519"/>
    </ligand>
</feature>
<feature type="binding site" evidence="1">
    <location>
        <position position="492"/>
    </location>
    <ligand>
        <name>hybrid [4Fe-2O-2S] cluster</name>
        <dbReference type="ChEBI" id="CHEBI:60519"/>
    </ligand>
</feature>
<feature type="binding site" evidence="1">
    <location>
        <position position="494"/>
    </location>
    <ligand>
        <name>hybrid [4Fe-2O-2S] cluster</name>
        <dbReference type="ChEBI" id="CHEBI:60519"/>
    </ligand>
</feature>
<feature type="modified residue" description="Cysteine persulfide" evidence="1">
    <location>
        <position position="405"/>
    </location>
</feature>
<gene>
    <name evidence="1" type="primary">hcp</name>
    <name type="ordered locus">GSU0674</name>
</gene>
<proteinExistence type="inferred from homology"/>